<dbReference type="EC" id="6.3.3.1" evidence="1"/>
<dbReference type="EMBL" id="CP000764">
    <property type="protein sequence ID" value="ABS20638.1"/>
    <property type="molecule type" value="Genomic_DNA"/>
</dbReference>
<dbReference type="RefSeq" id="WP_011983397.1">
    <property type="nucleotide sequence ID" value="NC_009674.1"/>
</dbReference>
<dbReference type="SMR" id="A7GKI0"/>
<dbReference type="STRING" id="315749.Bcer98_0275"/>
<dbReference type="GeneID" id="33895630"/>
<dbReference type="KEGG" id="bcy:Bcer98_0275"/>
<dbReference type="eggNOG" id="COG0150">
    <property type="taxonomic scope" value="Bacteria"/>
</dbReference>
<dbReference type="HOGENOM" id="CLU_047116_0_0_9"/>
<dbReference type="OrthoDB" id="9802507at2"/>
<dbReference type="UniPathway" id="UPA00074">
    <property type="reaction ID" value="UER00129"/>
</dbReference>
<dbReference type="Proteomes" id="UP000002300">
    <property type="component" value="Chromosome"/>
</dbReference>
<dbReference type="GO" id="GO:0005829">
    <property type="term" value="C:cytosol"/>
    <property type="evidence" value="ECO:0007669"/>
    <property type="project" value="TreeGrafter"/>
</dbReference>
<dbReference type="GO" id="GO:0005524">
    <property type="term" value="F:ATP binding"/>
    <property type="evidence" value="ECO:0007669"/>
    <property type="project" value="UniProtKB-KW"/>
</dbReference>
<dbReference type="GO" id="GO:0004637">
    <property type="term" value="F:phosphoribosylamine-glycine ligase activity"/>
    <property type="evidence" value="ECO:0007669"/>
    <property type="project" value="TreeGrafter"/>
</dbReference>
<dbReference type="GO" id="GO:0004641">
    <property type="term" value="F:phosphoribosylformylglycinamidine cyclo-ligase activity"/>
    <property type="evidence" value="ECO:0007669"/>
    <property type="project" value="UniProtKB-UniRule"/>
</dbReference>
<dbReference type="GO" id="GO:0006189">
    <property type="term" value="P:'de novo' IMP biosynthetic process"/>
    <property type="evidence" value="ECO:0007669"/>
    <property type="project" value="UniProtKB-UniRule"/>
</dbReference>
<dbReference type="GO" id="GO:0046084">
    <property type="term" value="P:adenine biosynthetic process"/>
    <property type="evidence" value="ECO:0007669"/>
    <property type="project" value="TreeGrafter"/>
</dbReference>
<dbReference type="CDD" id="cd02196">
    <property type="entry name" value="PurM"/>
    <property type="match status" value="1"/>
</dbReference>
<dbReference type="FunFam" id="3.30.1330.10:FF:000001">
    <property type="entry name" value="Phosphoribosylformylglycinamidine cyclo-ligase"/>
    <property type="match status" value="1"/>
</dbReference>
<dbReference type="FunFam" id="3.90.650.10:FF:000001">
    <property type="entry name" value="Phosphoribosylformylglycinamidine cyclo-ligase"/>
    <property type="match status" value="1"/>
</dbReference>
<dbReference type="Gene3D" id="3.90.650.10">
    <property type="entry name" value="PurM-like C-terminal domain"/>
    <property type="match status" value="1"/>
</dbReference>
<dbReference type="Gene3D" id="3.30.1330.10">
    <property type="entry name" value="PurM-like, N-terminal domain"/>
    <property type="match status" value="1"/>
</dbReference>
<dbReference type="HAMAP" id="MF_00741">
    <property type="entry name" value="AIRS"/>
    <property type="match status" value="1"/>
</dbReference>
<dbReference type="InterPro" id="IPR010918">
    <property type="entry name" value="PurM-like_C_dom"/>
</dbReference>
<dbReference type="InterPro" id="IPR036676">
    <property type="entry name" value="PurM-like_C_sf"/>
</dbReference>
<dbReference type="InterPro" id="IPR016188">
    <property type="entry name" value="PurM-like_N"/>
</dbReference>
<dbReference type="InterPro" id="IPR036921">
    <property type="entry name" value="PurM-like_N_sf"/>
</dbReference>
<dbReference type="InterPro" id="IPR004733">
    <property type="entry name" value="PurM_cligase"/>
</dbReference>
<dbReference type="NCBIfam" id="TIGR00878">
    <property type="entry name" value="purM"/>
    <property type="match status" value="1"/>
</dbReference>
<dbReference type="PANTHER" id="PTHR10520:SF12">
    <property type="entry name" value="TRIFUNCTIONAL PURINE BIOSYNTHETIC PROTEIN ADENOSINE-3"/>
    <property type="match status" value="1"/>
</dbReference>
<dbReference type="PANTHER" id="PTHR10520">
    <property type="entry name" value="TRIFUNCTIONAL PURINE BIOSYNTHETIC PROTEIN ADENOSINE-3-RELATED"/>
    <property type="match status" value="1"/>
</dbReference>
<dbReference type="Pfam" id="PF00586">
    <property type="entry name" value="AIRS"/>
    <property type="match status" value="1"/>
</dbReference>
<dbReference type="Pfam" id="PF02769">
    <property type="entry name" value="AIRS_C"/>
    <property type="match status" value="1"/>
</dbReference>
<dbReference type="SUPFAM" id="SSF56042">
    <property type="entry name" value="PurM C-terminal domain-like"/>
    <property type="match status" value="1"/>
</dbReference>
<dbReference type="SUPFAM" id="SSF55326">
    <property type="entry name" value="PurM N-terminal domain-like"/>
    <property type="match status" value="1"/>
</dbReference>
<reference key="1">
    <citation type="journal article" date="2008" name="Chem. Biol. Interact.">
        <title>Extending the Bacillus cereus group genomics to putative food-borne pathogens of different toxicity.</title>
        <authorList>
            <person name="Lapidus A."/>
            <person name="Goltsman E."/>
            <person name="Auger S."/>
            <person name="Galleron N."/>
            <person name="Segurens B."/>
            <person name="Dossat C."/>
            <person name="Land M.L."/>
            <person name="Broussolle V."/>
            <person name="Brillard J."/>
            <person name="Guinebretiere M.-H."/>
            <person name="Sanchis V."/>
            <person name="Nguen-the C."/>
            <person name="Lereclus D."/>
            <person name="Richardson P."/>
            <person name="Wincker P."/>
            <person name="Weissenbach J."/>
            <person name="Ehrlich S.D."/>
            <person name="Sorokin A."/>
        </authorList>
    </citation>
    <scope>NUCLEOTIDE SEQUENCE [LARGE SCALE GENOMIC DNA]</scope>
    <source>
        <strain>DSM 22905 / CIP 110041 / 391-98 / NVH 391-98</strain>
    </source>
</reference>
<protein>
    <recommendedName>
        <fullName evidence="1">Phosphoribosylformylglycinamidine cyclo-ligase</fullName>
        <ecNumber evidence="1">6.3.3.1</ecNumber>
    </recommendedName>
    <alternativeName>
        <fullName evidence="1">AIR synthase</fullName>
    </alternativeName>
    <alternativeName>
        <fullName evidence="1">AIRS</fullName>
    </alternativeName>
    <alternativeName>
        <fullName evidence="1">Phosphoribosyl-aminoimidazole synthetase</fullName>
    </alternativeName>
</protein>
<keyword id="KW-0067">ATP-binding</keyword>
<keyword id="KW-0963">Cytoplasm</keyword>
<keyword id="KW-0436">Ligase</keyword>
<keyword id="KW-0547">Nucleotide-binding</keyword>
<keyword id="KW-0658">Purine biosynthesis</keyword>
<organism>
    <name type="scientific">Bacillus cytotoxicus (strain DSM 22905 / CIP 110041 / 391-98 / NVH 391-98)</name>
    <dbReference type="NCBI Taxonomy" id="315749"/>
    <lineage>
        <taxon>Bacteria</taxon>
        <taxon>Bacillati</taxon>
        <taxon>Bacillota</taxon>
        <taxon>Bacilli</taxon>
        <taxon>Bacillales</taxon>
        <taxon>Bacillaceae</taxon>
        <taxon>Bacillus</taxon>
        <taxon>Bacillus cereus group</taxon>
    </lineage>
</organism>
<sequence length="347" mass="37481">MANAYKQAGVDIEAGYEAVSRMKKHVQTTMRKEVLGGLGGFGGMFDLSKLPLEEPVLVSGTDGVGTKLMLAFMADKHDTIGIDAVAMCVNDIVVQGAEPLFFLDYIACGKADPSKIEHIVKGIAEGCRQAGCSLIGGETAEMPGMYSKEEYDLAGFTVGIVDKKKIITGHSLDEGHVLIGLASSGIHSNGYSLVRKVLLEDGQMSLDRIYGRLELPLGEELLKPTKIYVKPILELLKKYEVYGMAHITGGGFIENIPRMLPKGIGAEIDLGSWNIQPIFSLIQEVGKIEEKEMFNIFNMGIGMVVAVKEENAKAVVRLLEEQGEKAYIIGRTVKGSGVAFNGGIDHE</sequence>
<name>PUR5_BACCN</name>
<feature type="chain" id="PRO_1000083449" description="Phosphoribosylformylglycinamidine cyclo-ligase">
    <location>
        <begin position="1"/>
        <end position="347"/>
    </location>
</feature>
<gene>
    <name evidence="1" type="primary">purM</name>
    <name type="ordered locus">Bcer98_0275</name>
</gene>
<accession>A7GKI0</accession>
<comment type="catalytic activity">
    <reaction evidence="1">
        <text>2-formamido-N(1)-(5-O-phospho-beta-D-ribosyl)acetamidine + ATP = 5-amino-1-(5-phospho-beta-D-ribosyl)imidazole + ADP + phosphate + H(+)</text>
        <dbReference type="Rhea" id="RHEA:23032"/>
        <dbReference type="ChEBI" id="CHEBI:15378"/>
        <dbReference type="ChEBI" id="CHEBI:30616"/>
        <dbReference type="ChEBI" id="CHEBI:43474"/>
        <dbReference type="ChEBI" id="CHEBI:137981"/>
        <dbReference type="ChEBI" id="CHEBI:147287"/>
        <dbReference type="ChEBI" id="CHEBI:456216"/>
        <dbReference type="EC" id="6.3.3.1"/>
    </reaction>
</comment>
<comment type="pathway">
    <text evidence="1">Purine metabolism; IMP biosynthesis via de novo pathway; 5-amino-1-(5-phospho-D-ribosyl)imidazole from N(2)-formyl-N(1)-(5-phospho-D-ribosyl)glycinamide: step 2/2.</text>
</comment>
<comment type="subcellular location">
    <subcellularLocation>
        <location evidence="1">Cytoplasm</location>
    </subcellularLocation>
</comment>
<comment type="similarity">
    <text evidence="1">Belongs to the AIR synthase family.</text>
</comment>
<proteinExistence type="inferred from homology"/>
<evidence type="ECO:0000255" key="1">
    <source>
        <dbReference type="HAMAP-Rule" id="MF_00741"/>
    </source>
</evidence>